<evidence type="ECO:0000255" key="1">
    <source>
        <dbReference type="HAMAP-Rule" id="MF_01416"/>
    </source>
</evidence>
<feature type="chain" id="PRO_1000184784" description="ATP synthase subunit delta">
    <location>
        <begin position="1"/>
        <end position="186"/>
    </location>
</feature>
<comment type="function">
    <text evidence="1">F(1)F(0) ATP synthase produces ATP from ADP in the presence of a proton or sodium gradient. F-type ATPases consist of two structural domains, F(1) containing the extramembraneous catalytic core and F(0) containing the membrane proton channel, linked together by a central stalk and a peripheral stalk. During catalysis, ATP synthesis in the catalytic domain of F(1) is coupled via a rotary mechanism of the central stalk subunits to proton translocation.</text>
</comment>
<comment type="function">
    <text evidence="1">This protein is part of the stalk that links CF(0) to CF(1). It either transmits conformational changes from CF(0) to CF(1) or is implicated in proton conduction.</text>
</comment>
<comment type="subunit">
    <text evidence="1">F-type ATPases have 2 components, F(1) - the catalytic core - and F(0) - the membrane proton channel. F(1) has five subunits: alpha(3), beta(3), gamma(1), delta(1), epsilon(1). CF(0) has four main subunits: a(1), b(1), b'(1) and c(10-14). The alpha and beta chains form an alternating ring which encloses part of the gamma chain. F(1) is attached to F(0) by a central stalk formed by the gamma and epsilon chains, while a peripheral stalk is formed by the delta, b and b' chains.</text>
</comment>
<comment type="subcellular location">
    <subcellularLocation>
        <location evidence="1">Cell inner membrane</location>
        <topology evidence="1">Peripheral membrane protein</topology>
    </subcellularLocation>
</comment>
<comment type="similarity">
    <text evidence="1">Belongs to the ATPase delta chain family.</text>
</comment>
<reference key="1">
    <citation type="journal article" date="2009" name="J. Bacteriol.">
        <title>Complete genome sequence of Rhodobacter sphaeroides KD131.</title>
        <authorList>
            <person name="Lim S.-K."/>
            <person name="Kim S.J."/>
            <person name="Cha S.H."/>
            <person name="Oh Y.-K."/>
            <person name="Rhee H.-J."/>
            <person name="Kim M.-S."/>
            <person name="Lee J.K."/>
        </authorList>
    </citation>
    <scope>NUCLEOTIDE SEQUENCE [LARGE SCALE GENOMIC DNA]</scope>
    <source>
        <strain>KD131 / KCTC 12085</strain>
    </source>
</reference>
<protein>
    <recommendedName>
        <fullName evidence="1">ATP synthase subunit delta</fullName>
    </recommendedName>
    <alternativeName>
        <fullName evidence="1">ATP synthase F(1) sector subunit delta</fullName>
    </alternativeName>
    <alternativeName>
        <fullName evidence="1">F-type ATPase subunit delta</fullName>
        <shortName evidence="1">F-ATPase subunit delta</shortName>
    </alternativeName>
</protein>
<proteinExistence type="inferred from homology"/>
<organism>
    <name type="scientific">Cereibacter sphaeroides (strain KD131 / KCTC 12085)</name>
    <name type="common">Rhodobacter sphaeroides</name>
    <dbReference type="NCBI Taxonomy" id="557760"/>
    <lineage>
        <taxon>Bacteria</taxon>
        <taxon>Pseudomonadati</taxon>
        <taxon>Pseudomonadota</taxon>
        <taxon>Alphaproteobacteria</taxon>
        <taxon>Rhodobacterales</taxon>
        <taxon>Paracoccaceae</taxon>
        <taxon>Cereibacter</taxon>
    </lineage>
</organism>
<sequence>MSEPASISSGIAARYAAAVFELAKDEGALPALEKDMDALGAAWSESADLRDLATSPVYAREEQQKAIAAVAAKMGLSTVTANTLALMGSKRRLFVLPQMVADVQNRIATEKGEITAEVTAAAPLSPEQAARLAATLKARAGKDVKLKTTVDESLIGGLVVKLGSSMIDTSVKARLAALQNAMKEVG</sequence>
<dbReference type="EMBL" id="CP001150">
    <property type="protein sequence ID" value="ACM00478.1"/>
    <property type="molecule type" value="Genomic_DNA"/>
</dbReference>
<dbReference type="RefSeq" id="WP_002719459.1">
    <property type="nucleotide sequence ID" value="NC_011963.1"/>
</dbReference>
<dbReference type="SMR" id="B9KPI5"/>
<dbReference type="GeneID" id="67446067"/>
<dbReference type="KEGG" id="rsk:RSKD131_0618"/>
<dbReference type="HOGENOM" id="CLU_085114_0_1_5"/>
<dbReference type="GO" id="GO:0005886">
    <property type="term" value="C:plasma membrane"/>
    <property type="evidence" value="ECO:0007669"/>
    <property type="project" value="UniProtKB-SubCell"/>
</dbReference>
<dbReference type="GO" id="GO:0045259">
    <property type="term" value="C:proton-transporting ATP synthase complex"/>
    <property type="evidence" value="ECO:0007669"/>
    <property type="project" value="UniProtKB-KW"/>
</dbReference>
<dbReference type="GO" id="GO:0046933">
    <property type="term" value="F:proton-transporting ATP synthase activity, rotational mechanism"/>
    <property type="evidence" value="ECO:0007669"/>
    <property type="project" value="UniProtKB-UniRule"/>
</dbReference>
<dbReference type="Gene3D" id="1.10.520.20">
    <property type="entry name" value="N-terminal domain of the delta subunit of the F1F0-ATP synthase"/>
    <property type="match status" value="1"/>
</dbReference>
<dbReference type="HAMAP" id="MF_01416">
    <property type="entry name" value="ATP_synth_delta_bact"/>
    <property type="match status" value="1"/>
</dbReference>
<dbReference type="InterPro" id="IPR026015">
    <property type="entry name" value="ATP_synth_OSCP/delta_N_sf"/>
</dbReference>
<dbReference type="InterPro" id="IPR020781">
    <property type="entry name" value="ATPase_OSCP/d_CS"/>
</dbReference>
<dbReference type="InterPro" id="IPR000711">
    <property type="entry name" value="ATPase_OSCP/dsu"/>
</dbReference>
<dbReference type="NCBIfam" id="TIGR01145">
    <property type="entry name" value="ATP_synt_delta"/>
    <property type="match status" value="1"/>
</dbReference>
<dbReference type="NCBIfam" id="NF004406">
    <property type="entry name" value="PRK05758.3-2"/>
    <property type="match status" value="1"/>
</dbReference>
<dbReference type="PANTHER" id="PTHR11910">
    <property type="entry name" value="ATP SYNTHASE DELTA CHAIN"/>
    <property type="match status" value="1"/>
</dbReference>
<dbReference type="Pfam" id="PF00213">
    <property type="entry name" value="OSCP"/>
    <property type="match status" value="1"/>
</dbReference>
<dbReference type="PRINTS" id="PR00125">
    <property type="entry name" value="ATPASEDELTA"/>
</dbReference>
<dbReference type="SUPFAM" id="SSF47928">
    <property type="entry name" value="N-terminal domain of the delta subunit of the F1F0-ATP synthase"/>
    <property type="match status" value="1"/>
</dbReference>
<dbReference type="PROSITE" id="PS00389">
    <property type="entry name" value="ATPASE_DELTA"/>
    <property type="match status" value="1"/>
</dbReference>
<keyword id="KW-0066">ATP synthesis</keyword>
<keyword id="KW-0997">Cell inner membrane</keyword>
<keyword id="KW-1003">Cell membrane</keyword>
<keyword id="KW-0139">CF(1)</keyword>
<keyword id="KW-0375">Hydrogen ion transport</keyword>
<keyword id="KW-0406">Ion transport</keyword>
<keyword id="KW-0472">Membrane</keyword>
<keyword id="KW-0813">Transport</keyword>
<gene>
    <name evidence="1" type="primary">atpH</name>
    <name type="ordered locus">RSKD131_0618</name>
</gene>
<accession>B9KPI5</accession>
<name>ATPD_CERSK</name>